<feature type="chain" id="PRO_0000257509" description="Putative pre-16S rRNA nuclease">
    <location>
        <begin position="1"/>
        <end position="149"/>
    </location>
</feature>
<keyword id="KW-0963">Cytoplasm</keyword>
<keyword id="KW-0378">Hydrolase</keyword>
<keyword id="KW-0540">Nuclease</keyword>
<keyword id="KW-0690">Ribosome biogenesis</keyword>
<accession>Q1BYL0</accession>
<gene>
    <name type="ordered locus">Bcen_0383</name>
</gene>
<sequence>MSGASARDATLLAFDYGEKRIGVAIGNALTRSARALVVIQNLNREHRFKAVGDLLAEWRPDALVVGLPMHPDGTPHDMTQQAKRFGNQLNGRFGLPVTWVDERYSSVEAEAGLRERNVRGRARTDMLDAEAARVILQQYLDQLSDHEHH</sequence>
<dbReference type="EC" id="3.1.-.-" evidence="1"/>
<dbReference type="EMBL" id="CP000378">
    <property type="protein sequence ID" value="ABF75295.1"/>
    <property type="molecule type" value="Genomic_DNA"/>
</dbReference>
<dbReference type="SMR" id="Q1BYL0"/>
<dbReference type="HOGENOM" id="CLU_098240_3_0_4"/>
<dbReference type="GO" id="GO:0005829">
    <property type="term" value="C:cytosol"/>
    <property type="evidence" value="ECO:0007669"/>
    <property type="project" value="TreeGrafter"/>
</dbReference>
<dbReference type="GO" id="GO:0004518">
    <property type="term" value="F:nuclease activity"/>
    <property type="evidence" value="ECO:0007669"/>
    <property type="project" value="UniProtKB-KW"/>
</dbReference>
<dbReference type="GO" id="GO:0000967">
    <property type="term" value="P:rRNA 5'-end processing"/>
    <property type="evidence" value="ECO:0007669"/>
    <property type="project" value="UniProtKB-UniRule"/>
</dbReference>
<dbReference type="CDD" id="cd16964">
    <property type="entry name" value="YqgF"/>
    <property type="match status" value="1"/>
</dbReference>
<dbReference type="Gene3D" id="3.30.420.140">
    <property type="entry name" value="YqgF/RNase H-like domain"/>
    <property type="match status" value="1"/>
</dbReference>
<dbReference type="HAMAP" id="MF_00651">
    <property type="entry name" value="Nuclease_YqgF"/>
    <property type="match status" value="1"/>
</dbReference>
<dbReference type="InterPro" id="IPR012337">
    <property type="entry name" value="RNaseH-like_sf"/>
</dbReference>
<dbReference type="InterPro" id="IPR005227">
    <property type="entry name" value="YqgF"/>
</dbReference>
<dbReference type="InterPro" id="IPR006641">
    <property type="entry name" value="YqgF/RNaseH-like_dom"/>
</dbReference>
<dbReference type="InterPro" id="IPR037027">
    <property type="entry name" value="YqgF/RNaseH-like_dom_sf"/>
</dbReference>
<dbReference type="NCBIfam" id="TIGR00250">
    <property type="entry name" value="RNAse_H_YqgF"/>
    <property type="match status" value="1"/>
</dbReference>
<dbReference type="PANTHER" id="PTHR33317">
    <property type="entry name" value="POLYNUCLEOTIDYL TRANSFERASE, RIBONUCLEASE H-LIKE SUPERFAMILY PROTEIN"/>
    <property type="match status" value="1"/>
</dbReference>
<dbReference type="PANTHER" id="PTHR33317:SF4">
    <property type="entry name" value="POLYNUCLEOTIDYL TRANSFERASE, RIBONUCLEASE H-LIKE SUPERFAMILY PROTEIN"/>
    <property type="match status" value="1"/>
</dbReference>
<dbReference type="Pfam" id="PF03652">
    <property type="entry name" value="RuvX"/>
    <property type="match status" value="1"/>
</dbReference>
<dbReference type="SMART" id="SM00732">
    <property type="entry name" value="YqgFc"/>
    <property type="match status" value="1"/>
</dbReference>
<dbReference type="SUPFAM" id="SSF53098">
    <property type="entry name" value="Ribonuclease H-like"/>
    <property type="match status" value="1"/>
</dbReference>
<organism>
    <name type="scientific">Burkholderia orbicola (strain AU 1054)</name>
    <dbReference type="NCBI Taxonomy" id="331271"/>
    <lineage>
        <taxon>Bacteria</taxon>
        <taxon>Pseudomonadati</taxon>
        <taxon>Pseudomonadota</taxon>
        <taxon>Betaproteobacteria</taxon>
        <taxon>Burkholderiales</taxon>
        <taxon>Burkholderiaceae</taxon>
        <taxon>Burkholderia</taxon>
        <taxon>Burkholderia cepacia complex</taxon>
        <taxon>Burkholderia orbicola</taxon>
    </lineage>
</organism>
<name>YQGF_BURO1</name>
<comment type="function">
    <text evidence="1">Could be a nuclease involved in processing of the 5'-end of pre-16S rRNA.</text>
</comment>
<comment type="subcellular location">
    <subcellularLocation>
        <location evidence="1">Cytoplasm</location>
    </subcellularLocation>
</comment>
<comment type="similarity">
    <text evidence="1">Belongs to the YqgF nuclease family.</text>
</comment>
<evidence type="ECO:0000255" key="1">
    <source>
        <dbReference type="HAMAP-Rule" id="MF_00651"/>
    </source>
</evidence>
<proteinExistence type="inferred from homology"/>
<reference key="1">
    <citation type="submission" date="2006-05" db="EMBL/GenBank/DDBJ databases">
        <title>Complete sequence of chromosome 1 of Burkholderia cenocepacia AU 1054.</title>
        <authorList>
            <consortium name="US DOE Joint Genome Institute"/>
            <person name="Copeland A."/>
            <person name="Lucas S."/>
            <person name="Lapidus A."/>
            <person name="Barry K."/>
            <person name="Detter J.C."/>
            <person name="Glavina del Rio T."/>
            <person name="Hammon N."/>
            <person name="Israni S."/>
            <person name="Dalin E."/>
            <person name="Tice H."/>
            <person name="Pitluck S."/>
            <person name="Chain P."/>
            <person name="Malfatti S."/>
            <person name="Shin M."/>
            <person name="Vergez L."/>
            <person name="Schmutz J."/>
            <person name="Larimer F."/>
            <person name="Land M."/>
            <person name="Hauser L."/>
            <person name="Kyrpides N."/>
            <person name="Lykidis A."/>
            <person name="LiPuma J.J."/>
            <person name="Konstantinidis K."/>
            <person name="Tiedje J.M."/>
            <person name="Richardson P."/>
        </authorList>
    </citation>
    <scope>NUCLEOTIDE SEQUENCE [LARGE SCALE GENOMIC DNA]</scope>
    <source>
        <strain>AU 1054</strain>
    </source>
</reference>
<protein>
    <recommendedName>
        <fullName evidence="1">Putative pre-16S rRNA nuclease</fullName>
        <ecNumber evidence="1">3.1.-.-</ecNumber>
    </recommendedName>
</protein>